<comment type="function">
    <text evidence="1">The heterodimer acts as both an ATP-dependent DNA helicase and an ATP-dependent, dual-direction single-stranded exonuclease. Recognizes the chi site generating a DNA molecule suitable for the initiation of homologous recombination. The AddA nuclease domain is required for chi fragment generation; this subunit has the helicase and 3' -&gt; 5' nuclease activities.</text>
</comment>
<comment type="catalytic activity">
    <reaction evidence="1">
        <text>Couples ATP hydrolysis with the unwinding of duplex DNA by translocating in the 3'-5' direction.</text>
        <dbReference type="EC" id="5.6.2.4"/>
    </reaction>
</comment>
<comment type="catalytic activity">
    <reaction evidence="1">
        <text>ATP + H2O = ADP + phosphate + H(+)</text>
        <dbReference type="Rhea" id="RHEA:13065"/>
        <dbReference type="ChEBI" id="CHEBI:15377"/>
        <dbReference type="ChEBI" id="CHEBI:15378"/>
        <dbReference type="ChEBI" id="CHEBI:30616"/>
        <dbReference type="ChEBI" id="CHEBI:43474"/>
        <dbReference type="ChEBI" id="CHEBI:456216"/>
        <dbReference type="EC" id="5.6.2.4"/>
    </reaction>
</comment>
<comment type="cofactor">
    <cofactor evidence="1">
        <name>Mg(2+)</name>
        <dbReference type="ChEBI" id="CHEBI:18420"/>
    </cofactor>
</comment>
<comment type="subunit">
    <text evidence="1">Heterodimer of AddA and AddB/RexB.</text>
</comment>
<comment type="similarity">
    <text evidence="1">Belongs to the helicase family. AddA subfamily.</text>
</comment>
<keyword id="KW-0067">ATP-binding</keyword>
<keyword id="KW-0227">DNA damage</keyword>
<keyword id="KW-0234">DNA repair</keyword>
<keyword id="KW-0238">DNA-binding</keyword>
<keyword id="KW-0269">Exonuclease</keyword>
<keyword id="KW-0347">Helicase</keyword>
<keyword id="KW-0378">Hydrolase</keyword>
<keyword id="KW-0413">Isomerase</keyword>
<keyword id="KW-0540">Nuclease</keyword>
<keyword id="KW-0547">Nucleotide-binding</keyword>
<keyword id="KW-1185">Reference proteome</keyword>
<protein>
    <recommendedName>
        <fullName evidence="1">ATP-dependent helicase/nuclease subunit A</fullName>
        <ecNumber evidence="1">3.1.-.-</ecNumber>
        <ecNumber evidence="1">5.6.2.4</ecNumber>
    </recommendedName>
    <alternativeName>
        <fullName evidence="1">ATP-dependent helicase/nuclease AddA</fullName>
    </alternativeName>
    <alternativeName>
        <fullName evidence="1">DNA 3'-5' helicase AddA</fullName>
    </alternativeName>
</protein>
<organism>
    <name type="scientific">Lactobacillus delbrueckii subsp. bulgaricus (strain ATCC 11842 / DSM 20081 / BCRC 10696 / JCM 1002 / NBRC 13953 / NCIMB 11778 / NCTC 12712 / WDCM 00102 / Lb 14)</name>
    <dbReference type="NCBI Taxonomy" id="390333"/>
    <lineage>
        <taxon>Bacteria</taxon>
        <taxon>Bacillati</taxon>
        <taxon>Bacillota</taxon>
        <taxon>Bacilli</taxon>
        <taxon>Lactobacillales</taxon>
        <taxon>Lactobacillaceae</taxon>
        <taxon>Lactobacillus</taxon>
    </lineage>
</organism>
<sequence>MAVKYTPDQARAIESRGQDLLVSASAGSGKTSVLVERVIREIMDDHLEVNQLLVITFTRAAASEMKQRIKQRLQDRLQEETDASQADFLRRQLAEIDTAIISTIDSFCLDVIRRFYFAIDIDPDFSILTDATQIELLKERALRDVENGYLQNEDQAKKDRFLALYDAFAGDSNANSARDLLLDLYQFAMARPNYRAWLQKLAAPYQLETSDVVDSALWQEKIKPYLEEEFSNLADKLTALMAEADFDHEKFAKYQPAFTAFATSLASYRESLATDDPFDRQRELLAACQFDGTLRTNKEIADFVEEAKEVKEAGKQLVFNVYTGFYASSNADQQALLAKGAEIASAAAEVELAFIDRFNELKRADRVLDFSDMEQLAYEILTQDSSNSDLARAYYQSRFKEIMVDEYQDTNALQDGLIQRLKKAGKNNLFMVGDVKQSIYGFRQAEPSLFIAKYDEYGQENSAGKQRIIFAENFRSSQPVTQAVNLIFDSLLTKDFGGIDYQKEGQLKFAAGYDPEAALPTETEVLYQEDSSATDDDGELNQGDLAMVISRIQKLIADQTPIFDPKTGQTRPVSYGDIAILTRSKTSNLDIKQEFDRYGVPLFVMDVQNYFQTFELTVIMSYLKIIDNPDQDIPLVAVLRSPIFNFSSSDLAEIRLVNKSVSFYAALRTYAKKDTDLAARCRDFLAQLQDLRDFSLSHRISELLWTIYERTSFLEIVTAMTNGQQRRLNLTALYERASAYESSGFKDLYQFINFIARMRKNQKDLAQPILSENAGNSVKLMTIHASKGLEFPVVFVLGLEHRYNYQQDITGSYVLDASGLGLSFAYPFDEAEYRADTLANVWLKIAKKQKLLEEEARLLYVALTRAKQKLILAANIKLPARTDLAGLEEKWAKEISAGRLTLLDKMKVAKPLDFLAPALARAKQVKRLGEKAVSDLATGQEGSLVFVHFDPKKDQAQLPDSEAVAASGADLTEDEAAVFKQAEKLYTFSQGGYPYLDASRTTAYQAVSEIKKVFGDPIEDELADSHISELQSANRYLQPIDTEPDFLFQNTVSSAELGTASHLVLQYYDYAKGDKNAIDSCIAGLVEKGRLSQTLASMLDREALSWFVKSDFAKDFYQQPDRLHREENFATILSPKTLFKDFSDFPGKILVHGTIDGYYEAENGIILFDYKTDHVNPRKQEEAIQKLKEKYQGQLRLYERALNESGRLPVLKKYLVLLSCREIVEVD</sequence>
<proteinExistence type="inferred from homology"/>
<gene>
    <name evidence="1" type="primary">addA</name>
    <name type="ordered locus">Ldb1001</name>
</gene>
<feature type="chain" id="PRO_0000379279" description="ATP-dependent helicase/nuclease subunit A">
    <location>
        <begin position="1"/>
        <end position="1227"/>
    </location>
</feature>
<feature type="domain" description="UvrD-like helicase ATP-binding" evidence="1">
    <location>
        <begin position="3"/>
        <end position="477"/>
    </location>
</feature>
<feature type="domain" description="UvrD-like helicase C-terminal" evidence="1">
    <location>
        <begin position="505"/>
        <end position="788"/>
    </location>
</feature>
<feature type="binding site" evidence="1">
    <location>
        <begin position="24"/>
        <end position="31"/>
    </location>
    <ligand>
        <name>ATP</name>
        <dbReference type="ChEBI" id="CHEBI:30616"/>
    </ligand>
</feature>
<dbReference type="EC" id="3.1.-.-" evidence="1"/>
<dbReference type="EC" id="5.6.2.4" evidence="1"/>
<dbReference type="EMBL" id="CR954253">
    <property type="protein sequence ID" value="CAI97803.1"/>
    <property type="molecule type" value="Genomic_DNA"/>
</dbReference>
<dbReference type="RefSeq" id="WP_011543869.1">
    <property type="nucleotide sequence ID" value="NC_008054.1"/>
</dbReference>
<dbReference type="SMR" id="Q1GAA9"/>
<dbReference type="STRING" id="390333.Ldb1001"/>
<dbReference type="KEGG" id="ldb:Ldb1001"/>
<dbReference type="PATRIC" id="fig|390333.13.peg.585"/>
<dbReference type="eggNOG" id="COG1074">
    <property type="taxonomic scope" value="Bacteria"/>
</dbReference>
<dbReference type="HOGENOM" id="CLU_001114_3_1_9"/>
<dbReference type="BioCyc" id="LDEL390333:LDB_RS04380-MONOMER"/>
<dbReference type="Proteomes" id="UP000001259">
    <property type="component" value="Chromosome"/>
</dbReference>
<dbReference type="GO" id="GO:0005829">
    <property type="term" value="C:cytosol"/>
    <property type="evidence" value="ECO:0007669"/>
    <property type="project" value="TreeGrafter"/>
</dbReference>
<dbReference type="GO" id="GO:0033202">
    <property type="term" value="C:DNA helicase complex"/>
    <property type="evidence" value="ECO:0007669"/>
    <property type="project" value="TreeGrafter"/>
</dbReference>
<dbReference type="GO" id="GO:0043138">
    <property type="term" value="F:3'-5' DNA helicase activity"/>
    <property type="evidence" value="ECO:0007669"/>
    <property type="project" value="UniProtKB-UniRule"/>
</dbReference>
<dbReference type="GO" id="GO:0008408">
    <property type="term" value="F:3'-5' exonuclease activity"/>
    <property type="evidence" value="ECO:0007669"/>
    <property type="project" value="UniProtKB-UniRule"/>
</dbReference>
<dbReference type="GO" id="GO:0005524">
    <property type="term" value="F:ATP binding"/>
    <property type="evidence" value="ECO:0007669"/>
    <property type="project" value="UniProtKB-UniRule"/>
</dbReference>
<dbReference type="GO" id="GO:0016887">
    <property type="term" value="F:ATP hydrolysis activity"/>
    <property type="evidence" value="ECO:0007669"/>
    <property type="project" value="RHEA"/>
</dbReference>
<dbReference type="GO" id="GO:0003690">
    <property type="term" value="F:double-stranded DNA binding"/>
    <property type="evidence" value="ECO:0007669"/>
    <property type="project" value="UniProtKB-UniRule"/>
</dbReference>
<dbReference type="GO" id="GO:0000724">
    <property type="term" value="P:double-strand break repair via homologous recombination"/>
    <property type="evidence" value="ECO:0007669"/>
    <property type="project" value="UniProtKB-UniRule"/>
</dbReference>
<dbReference type="CDD" id="cd17932">
    <property type="entry name" value="DEXQc_UvrD"/>
    <property type="match status" value="1"/>
</dbReference>
<dbReference type="Gene3D" id="3.90.320.10">
    <property type="match status" value="1"/>
</dbReference>
<dbReference type="Gene3D" id="3.40.50.300">
    <property type="entry name" value="P-loop containing nucleotide triphosphate hydrolases"/>
    <property type="match status" value="4"/>
</dbReference>
<dbReference type="HAMAP" id="MF_01451">
    <property type="entry name" value="AddA"/>
    <property type="match status" value="1"/>
</dbReference>
<dbReference type="InterPro" id="IPR014152">
    <property type="entry name" value="AddA"/>
</dbReference>
<dbReference type="InterPro" id="IPR014017">
    <property type="entry name" value="DNA_helicase_UvrD-like_C"/>
</dbReference>
<dbReference type="InterPro" id="IPR000212">
    <property type="entry name" value="DNA_helicase_UvrD/REP"/>
</dbReference>
<dbReference type="InterPro" id="IPR027417">
    <property type="entry name" value="P-loop_NTPase"/>
</dbReference>
<dbReference type="InterPro" id="IPR011604">
    <property type="entry name" value="PDDEXK-like_dom_sf"/>
</dbReference>
<dbReference type="InterPro" id="IPR038726">
    <property type="entry name" value="PDDEXK_AddAB-type"/>
</dbReference>
<dbReference type="InterPro" id="IPR011335">
    <property type="entry name" value="Restrct_endonuc-II-like"/>
</dbReference>
<dbReference type="InterPro" id="IPR014016">
    <property type="entry name" value="UvrD-like_ATP-bd"/>
</dbReference>
<dbReference type="NCBIfam" id="TIGR02785">
    <property type="entry name" value="addA_Gpos"/>
    <property type="match status" value="1"/>
</dbReference>
<dbReference type="PANTHER" id="PTHR11070:SF48">
    <property type="entry name" value="ATP-DEPENDENT HELICASE_NUCLEASE SUBUNIT A"/>
    <property type="match status" value="1"/>
</dbReference>
<dbReference type="PANTHER" id="PTHR11070">
    <property type="entry name" value="UVRD / RECB / PCRA DNA HELICASE FAMILY MEMBER"/>
    <property type="match status" value="1"/>
</dbReference>
<dbReference type="Pfam" id="PF12705">
    <property type="entry name" value="PDDEXK_1"/>
    <property type="match status" value="1"/>
</dbReference>
<dbReference type="Pfam" id="PF00580">
    <property type="entry name" value="UvrD-helicase"/>
    <property type="match status" value="1"/>
</dbReference>
<dbReference type="Pfam" id="PF13361">
    <property type="entry name" value="UvrD_C"/>
    <property type="match status" value="1"/>
</dbReference>
<dbReference type="SUPFAM" id="SSF52540">
    <property type="entry name" value="P-loop containing nucleoside triphosphate hydrolases"/>
    <property type="match status" value="1"/>
</dbReference>
<dbReference type="SUPFAM" id="SSF52980">
    <property type="entry name" value="Restriction endonuclease-like"/>
    <property type="match status" value="1"/>
</dbReference>
<dbReference type="PROSITE" id="PS51198">
    <property type="entry name" value="UVRD_HELICASE_ATP_BIND"/>
    <property type="match status" value="1"/>
</dbReference>
<dbReference type="PROSITE" id="PS51217">
    <property type="entry name" value="UVRD_HELICASE_CTER"/>
    <property type="match status" value="1"/>
</dbReference>
<name>ADDA_LACDA</name>
<reference key="1">
    <citation type="journal article" date="2006" name="Proc. Natl. Acad. Sci. U.S.A.">
        <title>The complete genome sequence of Lactobacillus bulgaricus reveals extensive and ongoing reductive evolution.</title>
        <authorList>
            <person name="van de Guchte M."/>
            <person name="Penaud S."/>
            <person name="Grimaldi C."/>
            <person name="Barbe V."/>
            <person name="Bryson K."/>
            <person name="Nicolas P."/>
            <person name="Robert C."/>
            <person name="Oztas S."/>
            <person name="Mangenot S."/>
            <person name="Couloux A."/>
            <person name="Loux V."/>
            <person name="Dervyn R."/>
            <person name="Bossy R."/>
            <person name="Bolotin A."/>
            <person name="Batto J.-M."/>
            <person name="Walunas T."/>
            <person name="Gibrat J.-F."/>
            <person name="Bessieres P."/>
            <person name="Weissenbach J."/>
            <person name="Ehrlich S.D."/>
            <person name="Maguin E."/>
        </authorList>
    </citation>
    <scope>NUCLEOTIDE SEQUENCE [LARGE SCALE GENOMIC DNA]</scope>
    <source>
        <strain>ATCC 11842 / DSM 20081 / BCRC 10696 / JCM 1002 / NBRC 13953 / NCIMB 11778 / NCTC 12712 / WDCM 00102 / Lb 14</strain>
    </source>
</reference>
<evidence type="ECO:0000255" key="1">
    <source>
        <dbReference type="HAMAP-Rule" id="MF_01451"/>
    </source>
</evidence>
<accession>Q1GAA9</accession>